<comment type="function">
    <text evidence="1">Component of the cytochrome b6-f complex, which mediates electron transfer between photosystem II (PSII) and photosystem I (PSI), cyclic electron flow around PSI, and state transitions.</text>
</comment>
<comment type="cofactor">
    <cofactor evidence="1">
        <name>heme b</name>
        <dbReference type="ChEBI" id="CHEBI:60344"/>
    </cofactor>
    <text evidence="1">Binds 2 heme b groups non-covalently with two histidine residues as axial ligands.</text>
</comment>
<comment type="cofactor">
    <cofactor evidence="1">
        <name>heme c</name>
        <dbReference type="ChEBI" id="CHEBI:61717"/>
    </cofactor>
    <text evidence="1">Binds one heme group covalently by a single cysteine link with no axial amino acid ligand. This heme was named heme ci.</text>
</comment>
<comment type="subunit">
    <text evidence="1">The 4 large subunits of the cytochrome b6-f complex are cytochrome b6, subunit IV (17 kDa polypeptide, PetD), cytochrome f and the Rieske protein, while the 4 small subunits are PetG, PetL, PetM and PetN. The complex functions as a dimer.</text>
</comment>
<comment type="subcellular location">
    <subcellularLocation>
        <location evidence="1">Cellular thylakoid membrane</location>
        <topology evidence="1">Multi-pass membrane protein</topology>
    </subcellularLocation>
</comment>
<comment type="miscellaneous">
    <text evidence="1">Heme 1 (or BH or b566) is high-potential and absorbs at about 566 nm, and heme 2 (or BL or b562) is low-potential and absorbs at about 562 nm.</text>
</comment>
<comment type="similarity">
    <text evidence="1">Belongs to the cytochrome b family. PetB subfamily.</text>
</comment>
<gene>
    <name evidence="1" type="primary">petB</name>
    <name type="ordered locus">P9303_21851</name>
</gene>
<reference key="1">
    <citation type="journal article" date="2007" name="PLoS Genet.">
        <title>Patterns and implications of gene gain and loss in the evolution of Prochlorococcus.</title>
        <authorList>
            <person name="Kettler G.C."/>
            <person name="Martiny A.C."/>
            <person name="Huang K."/>
            <person name="Zucker J."/>
            <person name="Coleman M.L."/>
            <person name="Rodrigue S."/>
            <person name="Chen F."/>
            <person name="Lapidus A."/>
            <person name="Ferriera S."/>
            <person name="Johnson J."/>
            <person name="Steglich C."/>
            <person name="Church G.M."/>
            <person name="Richardson P."/>
            <person name="Chisholm S.W."/>
        </authorList>
    </citation>
    <scope>NUCLEOTIDE SEQUENCE [LARGE SCALE GENOMIC DNA]</scope>
    <source>
        <strain>MIT 9303</strain>
    </source>
</reference>
<organism>
    <name type="scientific">Prochlorococcus marinus (strain MIT 9303)</name>
    <dbReference type="NCBI Taxonomy" id="59922"/>
    <lineage>
        <taxon>Bacteria</taxon>
        <taxon>Bacillati</taxon>
        <taxon>Cyanobacteriota</taxon>
        <taxon>Cyanophyceae</taxon>
        <taxon>Synechococcales</taxon>
        <taxon>Prochlorococcaceae</taxon>
        <taxon>Prochlorococcus</taxon>
    </lineage>
</organism>
<feature type="chain" id="PRO_1000061410" description="Cytochrome b6">
    <location>
        <begin position="1"/>
        <end position="218"/>
    </location>
</feature>
<feature type="transmembrane region" description="Helical" evidence="1">
    <location>
        <begin position="35"/>
        <end position="55"/>
    </location>
</feature>
<feature type="transmembrane region" description="Helical" evidence="1">
    <location>
        <begin position="93"/>
        <end position="113"/>
    </location>
</feature>
<feature type="transmembrane region" description="Helical" evidence="1">
    <location>
        <begin position="119"/>
        <end position="139"/>
    </location>
</feature>
<feature type="transmembrane region" description="Helical" evidence="1">
    <location>
        <begin position="189"/>
        <end position="209"/>
    </location>
</feature>
<feature type="binding site" description="covalent" evidence="1">
    <location>
        <position position="38"/>
    </location>
    <ligand>
        <name>heme c</name>
        <dbReference type="ChEBI" id="CHEBI:61717"/>
    </ligand>
</feature>
<feature type="binding site" description="axial binding residue" evidence="1">
    <location>
        <position position="89"/>
    </location>
    <ligand>
        <name>heme b</name>
        <dbReference type="ChEBI" id="CHEBI:60344"/>
        <label>2</label>
    </ligand>
    <ligandPart>
        <name>Fe</name>
        <dbReference type="ChEBI" id="CHEBI:18248"/>
    </ligandPart>
</feature>
<feature type="binding site" description="axial binding residue" evidence="1">
    <location>
        <position position="103"/>
    </location>
    <ligand>
        <name>heme b</name>
        <dbReference type="ChEBI" id="CHEBI:60344"/>
        <label>1</label>
    </ligand>
    <ligandPart>
        <name>Fe</name>
        <dbReference type="ChEBI" id="CHEBI:18248"/>
    </ligandPart>
</feature>
<feature type="binding site" description="axial binding residue" evidence="1">
    <location>
        <position position="190"/>
    </location>
    <ligand>
        <name>heme b</name>
        <dbReference type="ChEBI" id="CHEBI:60344"/>
        <label>2</label>
    </ligand>
    <ligandPart>
        <name>Fe</name>
        <dbReference type="ChEBI" id="CHEBI:18248"/>
    </ligandPart>
</feature>
<feature type="binding site" description="axial binding residue" evidence="1">
    <location>
        <position position="205"/>
    </location>
    <ligand>
        <name>heme b</name>
        <dbReference type="ChEBI" id="CHEBI:60344"/>
        <label>1</label>
    </ligand>
    <ligandPart>
        <name>Fe</name>
        <dbReference type="ChEBI" id="CHEBI:18248"/>
    </ligandPart>
</feature>
<proteinExistence type="inferred from homology"/>
<keyword id="KW-0249">Electron transport</keyword>
<keyword id="KW-0349">Heme</keyword>
<keyword id="KW-0408">Iron</keyword>
<keyword id="KW-0472">Membrane</keyword>
<keyword id="KW-0479">Metal-binding</keyword>
<keyword id="KW-0602">Photosynthesis</keyword>
<keyword id="KW-0793">Thylakoid</keyword>
<keyword id="KW-0812">Transmembrane</keyword>
<keyword id="KW-1133">Transmembrane helix</keyword>
<keyword id="KW-0813">Transport</keyword>
<sequence length="218" mass="24570">MTNSSPVYDWFQERLEIQAIADDVSSKYVPPHVNIFYCLGGITLVCFLVQFATGFAMTFYYKPTVTEAYSSVSYLMSDVSFGWLIRSVHRWSASMMVLMLILHVFRVYLTGGFKRPRELTWVTGVVMAVITVSFGVTGYSLPWDQVGYWAVKIVSGVPAAIPVVGDFMVELLRGGESVGQSTLTRFYSLHTFVLPWLLAVFMLMHFLMIRKQGISGPL</sequence>
<accession>A2CBR0</accession>
<name>CYB6_PROM3</name>
<evidence type="ECO:0000255" key="1">
    <source>
        <dbReference type="HAMAP-Rule" id="MF_00633"/>
    </source>
</evidence>
<protein>
    <recommendedName>
        <fullName evidence="1">Cytochrome b6</fullName>
    </recommendedName>
</protein>
<dbReference type="EMBL" id="CP000554">
    <property type="protein sequence ID" value="ABM78920.1"/>
    <property type="molecule type" value="Genomic_DNA"/>
</dbReference>
<dbReference type="RefSeq" id="WP_011131016.1">
    <property type="nucleotide sequence ID" value="NC_008820.1"/>
</dbReference>
<dbReference type="SMR" id="A2CBR0"/>
<dbReference type="STRING" id="59922.P9303_21851"/>
<dbReference type="KEGG" id="pmf:P9303_21851"/>
<dbReference type="HOGENOM" id="CLU_031114_0_2_3"/>
<dbReference type="BioCyc" id="PMAR59922:G1G80-1913-MONOMER"/>
<dbReference type="Proteomes" id="UP000002274">
    <property type="component" value="Chromosome"/>
</dbReference>
<dbReference type="GO" id="GO:0031676">
    <property type="term" value="C:plasma membrane-derived thylakoid membrane"/>
    <property type="evidence" value="ECO:0007669"/>
    <property type="project" value="UniProtKB-SubCell"/>
</dbReference>
<dbReference type="GO" id="GO:0045158">
    <property type="term" value="F:electron transporter, transferring electrons within cytochrome b6/f complex of photosystem II activity"/>
    <property type="evidence" value="ECO:0007669"/>
    <property type="project" value="UniProtKB-UniRule"/>
</dbReference>
<dbReference type="GO" id="GO:0046872">
    <property type="term" value="F:metal ion binding"/>
    <property type="evidence" value="ECO:0007669"/>
    <property type="project" value="UniProtKB-KW"/>
</dbReference>
<dbReference type="GO" id="GO:0016491">
    <property type="term" value="F:oxidoreductase activity"/>
    <property type="evidence" value="ECO:0007669"/>
    <property type="project" value="InterPro"/>
</dbReference>
<dbReference type="GO" id="GO:0015979">
    <property type="term" value="P:photosynthesis"/>
    <property type="evidence" value="ECO:0007669"/>
    <property type="project" value="UniProtKB-UniRule"/>
</dbReference>
<dbReference type="GO" id="GO:0022904">
    <property type="term" value="P:respiratory electron transport chain"/>
    <property type="evidence" value="ECO:0007669"/>
    <property type="project" value="InterPro"/>
</dbReference>
<dbReference type="CDD" id="cd00284">
    <property type="entry name" value="Cytochrome_b_N"/>
    <property type="match status" value="1"/>
</dbReference>
<dbReference type="FunFam" id="1.20.810.10:FF:000001">
    <property type="entry name" value="Cytochrome b6"/>
    <property type="match status" value="1"/>
</dbReference>
<dbReference type="Gene3D" id="1.20.810.10">
    <property type="entry name" value="Cytochrome Bc1 Complex, Chain C"/>
    <property type="match status" value="1"/>
</dbReference>
<dbReference type="HAMAP" id="MF_00633">
    <property type="entry name" value="Cytb6_f_cytb6"/>
    <property type="match status" value="1"/>
</dbReference>
<dbReference type="InterPro" id="IPR005797">
    <property type="entry name" value="Cyt_b/b6_N"/>
</dbReference>
<dbReference type="InterPro" id="IPR023530">
    <property type="entry name" value="Cyt_B6_PetB"/>
</dbReference>
<dbReference type="InterPro" id="IPR027387">
    <property type="entry name" value="Cytb/b6-like_sf"/>
</dbReference>
<dbReference type="InterPro" id="IPR048259">
    <property type="entry name" value="Cytochrome_b_N_euk/bac"/>
</dbReference>
<dbReference type="InterPro" id="IPR016174">
    <property type="entry name" value="Di-haem_cyt_TM"/>
</dbReference>
<dbReference type="NCBIfam" id="NF002990">
    <property type="entry name" value="PRK03735.1"/>
    <property type="match status" value="1"/>
</dbReference>
<dbReference type="PANTHER" id="PTHR19271">
    <property type="entry name" value="CYTOCHROME B"/>
    <property type="match status" value="1"/>
</dbReference>
<dbReference type="PANTHER" id="PTHR19271:SF16">
    <property type="entry name" value="CYTOCHROME B"/>
    <property type="match status" value="1"/>
</dbReference>
<dbReference type="Pfam" id="PF00033">
    <property type="entry name" value="Cytochrome_B"/>
    <property type="match status" value="1"/>
</dbReference>
<dbReference type="PIRSF" id="PIRSF000032">
    <property type="entry name" value="Cytochrome_b6"/>
    <property type="match status" value="1"/>
</dbReference>
<dbReference type="SUPFAM" id="SSF81342">
    <property type="entry name" value="Transmembrane di-heme cytochromes"/>
    <property type="match status" value="1"/>
</dbReference>
<dbReference type="PROSITE" id="PS51002">
    <property type="entry name" value="CYTB_NTER"/>
    <property type="match status" value="1"/>
</dbReference>